<accession>Q1GP64</accession>
<reference key="1">
    <citation type="journal article" date="2009" name="Proc. Natl. Acad. Sci. U.S.A.">
        <title>The genomic basis of trophic strategy in marine bacteria.</title>
        <authorList>
            <person name="Lauro F.M."/>
            <person name="McDougald D."/>
            <person name="Thomas T."/>
            <person name="Williams T.J."/>
            <person name="Egan S."/>
            <person name="Rice S."/>
            <person name="DeMaere M.Z."/>
            <person name="Ting L."/>
            <person name="Ertan H."/>
            <person name="Johnson J."/>
            <person name="Ferriera S."/>
            <person name="Lapidus A."/>
            <person name="Anderson I."/>
            <person name="Kyrpides N."/>
            <person name="Munk A.C."/>
            <person name="Detter C."/>
            <person name="Han C.S."/>
            <person name="Brown M.V."/>
            <person name="Robb F.T."/>
            <person name="Kjelleberg S."/>
            <person name="Cavicchioli R."/>
        </authorList>
    </citation>
    <scope>NUCLEOTIDE SEQUENCE [LARGE SCALE GENOMIC DNA]</scope>
    <source>
        <strain>DSM 13593 / LMG 18877 / RB2256</strain>
    </source>
</reference>
<comment type="function">
    <text evidence="1">Exhibits a very high intrinsic GTPase hydrolysis rate. Involved in the addition of a carboxymethylaminomethyl (cmnm) group at the wobble position (U34) of certain tRNAs, forming tRNA-cmnm(5)s(2)U34.</text>
</comment>
<comment type="cofactor">
    <cofactor evidence="1">
        <name>K(+)</name>
        <dbReference type="ChEBI" id="CHEBI:29103"/>
    </cofactor>
    <text evidence="1">Binds 1 potassium ion per subunit.</text>
</comment>
<comment type="subunit">
    <text evidence="1">Homodimer. Heterotetramer of two MnmE and two MnmG subunits.</text>
</comment>
<comment type="subcellular location">
    <subcellularLocation>
        <location evidence="1">Cytoplasm</location>
    </subcellularLocation>
</comment>
<comment type="similarity">
    <text evidence="1">Belongs to the TRAFAC class TrmE-Era-EngA-EngB-Septin-like GTPase superfamily. TrmE GTPase family.</text>
</comment>
<gene>
    <name evidence="1" type="primary">mnmE</name>
    <name evidence="1" type="synonym">trmE</name>
    <name type="ordered locus">Sala_2853</name>
</gene>
<proteinExistence type="inferred from homology"/>
<name>MNME_SPHAL</name>
<protein>
    <recommendedName>
        <fullName evidence="1">tRNA modification GTPase MnmE</fullName>
        <ecNumber evidence="1">3.6.-.-</ecNumber>
    </recommendedName>
</protein>
<dbReference type="EC" id="3.6.-.-" evidence="1"/>
<dbReference type="EMBL" id="CP000356">
    <property type="protein sequence ID" value="ABF54558.1"/>
    <property type="molecule type" value="Genomic_DNA"/>
</dbReference>
<dbReference type="SMR" id="Q1GP64"/>
<dbReference type="STRING" id="317655.Sala_2853"/>
<dbReference type="KEGG" id="sal:Sala_2853"/>
<dbReference type="eggNOG" id="COG0486">
    <property type="taxonomic scope" value="Bacteria"/>
</dbReference>
<dbReference type="HOGENOM" id="CLU_019624_3_1_5"/>
<dbReference type="Proteomes" id="UP000006578">
    <property type="component" value="Chromosome"/>
</dbReference>
<dbReference type="GO" id="GO:0005737">
    <property type="term" value="C:cytoplasm"/>
    <property type="evidence" value="ECO:0007669"/>
    <property type="project" value="UniProtKB-SubCell"/>
</dbReference>
<dbReference type="GO" id="GO:0005525">
    <property type="term" value="F:GTP binding"/>
    <property type="evidence" value="ECO:0007669"/>
    <property type="project" value="UniProtKB-UniRule"/>
</dbReference>
<dbReference type="GO" id="GO:0003924">
    <property type="term" value="F:GTPase activity"/>
    <property type="evidence" value="ECO:0007669"/>
    <property type="project" value="UniProtKB-UniRule"/>
</dbReference>
<dbReference type="GO" id="GO:0046872">
    <property type="term" value="F:metal ion binding"/>
    <property type="evidence" value="ECO:0007669"/>
    <property type="project" value="UniProtKB-KW"/>
</dbReference>
<dbReference type="GO" id="GO:0030488">
    <property type="term" value="P:tRNA methylation"/>
    <property type="evidence" value="ECO:0007669"/>
    <property type="project" value="TreeGrafter"/>
</dbReference>
<dbReference type="GO" id="GO:0002098">
    <property type="term" value="P:tRNA wobble uridine modification"/>
    <property type="evidence" value="ECO:0007669"/>
    <property type="project" value="TreeGrafter"/>
</dbReference>
<dbReference type="CDD" id="cd04164">
    <property type="entry name" value="trmE"/>
    <property type="match status" value="1"/>
</dbReference>
<dbReference type="CDD" id="cd14858">
    <property type="entry name" value="TrmE_N"/>
    <property type="match status" value="1"/>
</dbReference>
<dbReference type="Gene3D" id="3.40.50.300">
    <property type="entry name" value="P-loop containing nucleotide triphosphate hydrolases"/>
    <property type="match status" value="1"/>
</dbReference>
<dbReference type="Gene3D" id="3.30.1360.120">
    <property type="entry name" value="Probable tRNA modification gtpase trme, domain 1"/>
    <property type="match status" value="1"/>
</dbReference>
<dbReference type="Gene3D" id="1.20.120.430">
    <property type="entry name" value="tRNA modification GTPase MnmE domain 2"/>
    <property type="match status" value="1"/>
</dbReference>
<dbReference type="HAMAP" id="MF_00379">
    <property type="entry name" value="GTPase_MnmE"/>
    <property type="match status" value="1"/>
</dbReference>
<dbReference type="InterPro" id="IPR031168">
    <property type="entry name" value="G_TrmE"/>
</dbReference>
<dbReference type="InterPro" id="IPR006073">
    <property type="entry name" value="GTP-bd"/>
</dbReference>
<dbReference type="InterPro" id="IPR018948">
    <property type="entry name" value="GTP-bd_TrmE_N"/>
</dbReference>
<dbReference type="InterPro" id="IPR004520">
    <property type="entry name" value="GTPase_MnmE"/>
</dbReference>
<dbReference type="InterPro" id="IPR027368">
    <property type="entry name" value="MnmE_dom2"/>
</dbReference>
<dbReference type="InterPro" id="IPR025867">
    <property type="entry name" value="MnmE_helical"/>
</dbReference>
<dbReference type="InterPro" id="IPR027417">
    <property type="entry name" value="P-loop_NTPase"/>
</dbReference>
<dbReference type="InterPro" id="IPR005225">
    <property type="entry name" value="Small_GTP-bd"/>
</dbReference>
<dbReference type="InterPro" id="IPR027266">
    <property type="entry name" value="TrmE/GcvT_dom1"/>
</dbReference>
<dbReference type="NCBIfam" id="NF003661">
    <property type="entry name" value="PRK05291.1-3"/>
    <property type="match status" value="1"/>
</dbReference>
<dbReference type="NCBIfam" id="TIGR00231">
    <property type="entry name" value="small_GTP"/>
    <property type="match status" value="1"/>
</dbReference>
<dbReference type="PANTHER" id="PTHR42714">
    <property type="entry name" value="TRNA MODIFICATION GTPASE GTPBP3"/>
    <property type="match status" value="1"/>
</dbReference>
<dbReference type="PANTHER" id="PTHR42714:SF2">
    <property type="entry name" value="TRNA MODIFICATION GTPASE GTPBP3, MITOCHONDRIAL"/>
    <property type="match status" value="1"/>
</dbReference>
<dbReference type="Pfam" id="PF01926">
    <property type="entry name" value="MMR_HSR1"/>
    <property type="match status" value="1"/>
</dbReference>
<dbReference type="Pfam" id="PF12631">
    <property type="entry name" value="MnmE_helical"/>
    <property type="match status" value="1"/>
</dbReference>
<dbReference type="Pfam" id="PF10396">
    <property type="entry name" value="TrmE_N"/>
    <property type="match status" value="1"/>
</dbReference>
<dbReference type="SUPFAM" id="SSF52540">
    <property type="entry name" value="P-loop containing nucleoside triphosphate hydrolases"/>
    <property type="match status" value="1"/>
</dbReference>
<dbReference type="SUPFAM" id="SSF116878">
    <property type="entry name" value="TrmE connector domain"/>
    <property type="match status" value="1"/>
</dbReference>
<dbReference type="PROSITE" id="PS51709">
    <property type="entry name" value="G_TRME"/>
    <property type="match status" value="1"/>
</dbReference>
<organism>
    <name type="scientific">Sphingopyxis alaskensis (strain DSM 13593 / LMG 18877 / RB2256)</name>
    <name type="common">Sphingomonas alaskensis</name>
    <dbReference type="NCBI Taxonomy" id="317655"/>
    <lineage>
        <taxon>Bacteria</taxon>
        <taxon>Pseudomonadati</taxon>
        <taxon>Pseudomonadota</taxon>
        <taxon>Alphaproteobacteria</taxon>
        <taxon>Sphingomonadales</taxon>
        <taxon>Sphingomonadaceae</taxon>
        <taxon>Sphingopyxis</taxon>
    </lineage>
</organism>
<feature type="chain" id="PRO_0000345910" description="tRNA modification GTPase MnmE">
    <location>
        <begin position="1"/>
        <end position="419"/>
    </location>
</feature>
<feature type="domain" description="TrmE-type G">
    <location>
        <begin position="197"/>
        <end position="343"/>
    </location>
</feature>
<feature type="binding site" evidence="1">
    <location>
        <position position="2"/>
    </location>
    <ligand>
        <name>(6S)-5-formyl-5,6,7,8-tetrahydrofolate</name>
        <dbReference type="ChEBI" id="CHEBI:57457"/>
    </ligand>
</feature>
<feature type="binding site" evidence="1">
    <location>
        <position position="59"/>
    </location>
    <ligand>
        <name>(6S)-5-formyl-5,6,7,8-tetrahydrofolate</name>
        <dbReference type="ChEBI" id="CHEBI:57457"/>
    </ligand>
</feature>
<feature type="binding site" evidence="1">
    <location>
        <position position="99"/>
    </location>
    <ligand>
        <name>(6S)-5-formyl-5,6,7,8-tetrahydrofolate</name>
        <dbReference type="ChEBI" id="CHEBI:57457"/>
    </ligand>
</feature>
<feature type="binding site" evidence="1">
    <location>
        <begin position="207"/>
        <end position="212"/>
    </location>
    <ligand>
        <name>GTP</name>
        <dbReference type="ChEBI" id="CHEBI:37565"/>
    </ligand>
</feature>
<feature type="binding site" evidence="1">
    <location>
        <position position="207"/>
    </location>
    <ligand>
        <name>K(+)</name>
        <dbReference type="ChEBI" id="CHEBI:29103"/>
    </ligand>
</feature>
<feature type="binding site" evidence="1">
    <location>
        <position position="211"/>
    </location>
    <ligand>
        <name>Mg(2+)</name>
        <dbReference type="ChEBI" id="CHEBI:18420"/>
    </ligand>
</feature>
<feature type="binding site" evidence="1">
    <location>
        <begin position="226"/>
        <end position="232"/>
    </location>
    <ligand>
        <name>GTP</name>
        <dbReference type="ChEBI" id="CHEBI:37565"/>
    </ligand>
</feature>
<feature type="binding site" evidence="1">
    <location>
        <position position="226"/>
    </location>
    <ligand>
        <name>K(+)</name>
        <dbReference type="ChEBI" id="CHEBI:29103"/>
    </ligand>
</feature>
<feature type="binding site" evidence="1">
    <location>
        <position position="228"/>
    </location>
    <ligand>
        <name>K(+)</name>
        <dbReference type="ChEBI" id="CHEBI:29103"/>
    </ligand>
</feature>
<feature type="binding site" evidence="1">
    <location>
        <position position="231"/>
    </location>
    <ligand>
        <name>K(+)</name>
        <dbReference type="ChEBI" id="CHEBI:29103"/>
    </ligand>
</feature>
<feature type="binding site" evidence="1">
    <location>
        <position position="232"/>
    </location>
    <ligand>
        <name>Mg(2+)</name>
        <dbReference type="ChEBI" id="CHEBI:18420"/>
    </ligand>
</feature>
<feature type="binding site" evidence="1">
    <location>
        <begin position="251"/>
        <end position="254"/>
    </location>
    <ligand>
        <name>GTP</name>
        <dbReference type="ChEBI" id="CHEBI:37565"/>
    </ligand>
</feature>
<feature type="binding site" evidence="1">
    <location>
        <position position="419"/>
    </location>
    <ligand>
        <name>(6S)-5-formyl-5,6,7,8-tetrahydrofolate</name>
        <dbReference type="ChEBI" id="CHEBI:57457"/>
    </ligand>
</feature>
<sequence>MRISGIDAAKALQALAGRLPTPRRASLARLTDTDGGALDHALILWFPGPATATGEDLAELHLHGGRAVVAAVEAALAAMPGLRRAEAGEFTRRAFANGRIDLAEAEGLADLLAAETESQRVQALDHASGHVSRAVAGWQARLLALMAAAEAELNFADEDDVEVGEGVAQRVSEGMAALAGELGEWLARPAAEVIAEGLSVVIAGPPNAGKSTLINALAQRELAIVSPVAGTTRDVIETPLALDGIAMRFSDTAGLRGESADAIEMIGIDRAKAAVEGADILLWLGAPKEAPEHPRTILIAAQADRWRGDAAAEAEAAHCDLILSAATGEGMDRLHTMIVEMARTLLPREGEATLRQRQRDALAEAKGWLEVETGSREAGDLILLAERLRLAGATLDRITGRGGVEDMLDTLFGRFCIGK</sequence>
<evidence type="ECO:0000255" key="1">
    <source>
        <dbReference type="HAMAP-Rule" id="MF_00379"/>
    </source>
</evidence>
<keyword id="KW-0963">Cytoplasm</keyword>
<keyword id="KW-0342">GTP-binding</keyword>
<keyword id="KW-0378">Hydrolase</keyword>
<keyword id="KW-0460">Magnesium</keyword>
<keyword id="KW-0479">Metal-binding</keyword>
<keyword id="KW-0547">Nucleotide-binding</keyword>
<keyword id="KW-0630">Potassium</keyword>
<keyword id="KW-1185">Reference proteome</keyword>
<keyword id="KW-0819">tRNA processing</keyword>